<organism>
    <name type="scientific">Chromobacterium violaceum (strain ATCC 12472 / DSM 30191 / JCM 1249 / CCUG 213 / NBRC 12614 / NCIMB 9131 / NCTC 9757 / MK)</name>
    <dbReference type="NCBI Taxonomy" id="243365"/>
    <lineage>
        <taxon>Bacteria</taxon>
        <taxon>Pseudomonadati</taxon>
        <taxon>Pseudomonadota</taxon>
        <taxon>Betaproteobacteria</taxon>
        <taxon>Neisseriales</taxon>
        <taxon>Chromobacteriaceae</taxon>
        <taxon>Chromobacterium</taxon>
    </lineage>
</organism>
<protein>
    <recommendedName>
        <fullName evidence="1">Putative membrane protein insertion efficiency factor</fullName>
    </recommendedName>
</protein>
<evidence type="ECO:0000255" key="1">
    <source>
        <dbReference type="HAMAP-Rule" id="MF_00386"/>
    </source>
</evidence>
<evidence type="ECO:0000305" key="2"/>
<keyword id="KW-0997">Cell inner membrane</keyword>
<keyword id="KW-1003">Cell membrane</keyword>
<keyword id="KW-0472">Membrane</keyword>
<keyword id="KW-1185">Reference proteome</keyword>
<accession>Q7NPT7</accession>
<sequence>MSRILILLIRFYQLAISPWLAPRCRFQPTCSGYAIEAVSKHGALKGGCLAARRICRCHPWGGSGYDPVP</sequence>
<gene>
    <name type="ordered locus">CV_4405</name>
</gene>
<feature type="chain" id="PRO_0000171813" description="Putative membrane protein insertion efficiency factor">
    <location>
        <begin position="1"/>
        <end position="69"/>
    </location>
</feature>
<name>YIDD_CHRVO</name>
<dbReference type="EMBL" id="AE016825">
    <property type="protein sequence ID" value="AAQ62064.1"/>
    <property type="status" value="ALT_INIT"/>
    <property type="molecule type" value="Genomic_DNA"/>
</dbReference>
<dbReference type="RefSeq" id="WP_043596958.1">
    <property type="nucleotide sequence ID" value="NC_005085.1"/>
</dbReference>
<dbReference type="STRING" id="243365.CV_4405"/>
<dbReference type="GeneID" id="66366115"/>
<dbReference type="KEGG" id="cvi:CV_4405"/>
<dbReference type="eggNOG" id="COG0759">
    <property type="taxonomic scope" value="Bacteria"/>
</dbReference>
<dbReference type="HOGENOM" id="CLU_144811_6_1_4"/>
<dbReference type="OrthoDB" id="9801753at2"/>
<dbReference type="Proteomes" id="UP000001424">
    <property type="component" value="Chromosome"/>
</dbReference>
<dbReference type="GO" id="GO:0005886">
    <property type="term" value="C:plasma membrane"/>
    <property type="evidence" value="ECO:0007669"/>
    <property type="project" value="UniProtKB-SubCell"/>
</dbReference>
<dbReference type="HAMAP" id="MF_00386">
    <property type="entry name" value="UPF0161_YidD"/>
    <property type="match status" value="1"/>
</dbReference>
<dbReference type="InterPro" id="IPR002696">
    <property type="entry name" value="Membr_insert_effic_factor_YidD"/>
</dbReference>
<dbReference type="NCBIfam" id="TIGR00278">
    <property type="entry name" value="membrane protein insertion efficiency factor YidD"/>
    <property type="match status" value="1"/>
</dbReference>
<dbReference type="PANTHER" id="PTHR33383">
    <property type="entry name" value="MEMBRANE PROTEIN INSERTION EFFICIENCY FACTOR-RELATED"/>
    <property type="match status" value="1"/>
</dbReference>
<dbReference type="PANTHER" id="PTHR33383:SF1">
    <property type="entry name" value="MEMBRANE PROTEIN INSERTION EFFICIENCY FACTOR-RELATED"/>
    <property type="match status" value="1"/>
</dbReference>
<dbReference type="Pfam" id="PF01809">
    <property type="entry name" value="YidD"/>
    <property type="match status" value="1"/>
</dbReference>
<dbReference type="SMART" id="SM01234">
    <property type="entry name" value="Haemolytic"/>
    <property type="match status" value="1"/>
</dbReference>
<comment type="function">
    <text evidence="1">Could be involved in insertion of integral membrane proteins into the membrane.</text>
</comment>
<comment type="subcellular location">
    <subcellularLocation>
        <location evidence="1">Cell inner membrane</location>
        <topology evidence="1">Peripheral membrane protein</topology>
        <orientation evidence="1">Cytoplasmic side</orientation>
    </subcellularLocation>
</comment>
<comment type="similarity">
    <text evidence="1">Belongs to the UPF0161 family.</text>
</comment>
<comment type="sequence caution" evidence="2">
    <conflict type="erroneous initiation">
        <sequence resource="EMBL-CDS" id="AAQ62064"/>
    </conflict>
</comment>
<reference key="1">
    <citation type="journal article" date="2003" name="Proc. Natl. Acad. Sci. U.S.A.">
        <title>The complete genome sequence of Chromobacterium violaceum reveals remarkable and exploitable bacterial adaptability.</title>
        <authorList>
            <person name="Vasconcelos A.T.R."/>
            <person name="de Almeida D.F."/>
            <person name="Hungria M."/>
            <person name="Guimaraes C.T."/>
            <person name="Antonio R.V."/>
            <person name="Almeida F.C."/>
            <person name="de Almeida L.G.P."/>
            <person name="de Almeida R."/>
            <person name="Alves-Gomes J.A."/>
            <person name="Andrade E.M."/>
            <person name="Araripe J."/>
            <person name="de Araujo M.F.F."/>
            <person name="Astolfi-Filho S."/>
            <person name="Azevedo V."/>
            <person name="Baptista A.J."/>
            <person name="Bataus L.A.M."/>
            <person name="Batista J.S."/>
            <person name="Belo A."/>
            <person name="van den Berg C."/>
            <person name="Bogo M."/>
            <person name="Bonatto S."/>
            <person name="Bordignon J."/>
            <person name="Brigido M.M."/>
            <person name="Brito C.A."/>
            <person name="Brocchi M."/>
            <person name="Burity H.A."/>
            <person name="Camargo A.A."/>
            <person name="Cardoso D.D.P."/>
            <person name="Carneiro N.P."/>
            <person name="Carraro D.M."/>
            <person name="Carvalho C.M.B."/>
            <person name="Cascardo J.C.M."/>
            <person name="Cavada B.S."/>
            <person name="Chueire L.M.O."/>
            <person name="Creczynski-Pasa T.B."/>
            <person name="Cunha-Junior N.C."/>
            <person name="Fagundes N."/>
            <person name="Falcao C.L."/>
            <person name="Fantinatti F."/>
            <person name="Farias I.P."/>
            <person name="Felipe M.S.S."/>
            <person name="Ferrari L.P."/>
            <person name="Ferro J.A."/>
            <person name="Ferro M.I.T."/>
            <person name="Franco G.R."/>
            <person name="Freitas N.S.A."/>
            <person name="Furlan L.R."/>
            <person name="Gazzinelli R.T."/>
            <person name="Gomes E.A."/>
            <person name="Goncalves P.R."/>
            <person name="Grangeiro T.B."/>
            <person name="Grattapaglia D."/>
            <person name="Grisard E.C."/>
            <person name="Hanna E.S."/>
            <person name="Jardim S.N."/>
            <person name="Laurino J."/>
            <person name="Leoi L.C.T."/>
            <person name="Lima L.F.A."/>
            <person name="Loureiro M.F."/>
            <person name="Lyra M.C.C.P."/>
            <person name="Madeira H.M.F."/>
            <person name="Manfio G.P."/>
            <person name="Maranhao A.Q."/>
            <person name="Martins W.S."/>
            <person name="di Mauro S.M.Z."/>
            <person name="de Medeiros S.R.B."/>
            <person name="Meissner R.V."/>
            <person name="Moreira M.A.M."/>
            <person name="Nascimento F.F."/>
            <person name="Nicolas M.F."/>
            <person name="Oliveira J.G."/>
            <person name="Oliveira S.C."/>
            <person name="Paixao R.F.C."/>
            <person name="Parente J.A."/>
            <person name="Pedrosa F.O."/>
            <person name="Pena S.D.J."/>
            <person name="Pereira J.O."/>
            <person name="Pereira M."/>
            <person name="Pinto L.S.R.C."/>
            <person name="Pinto L.S."/>
            <person name="Porto J.I.R."/>
            <person name="Potrich D.P."/>
            <person name="Ramalho-Neto C.E."/>
            <person name="Reis A.M.M."/>
            <person name="Rigo L.U."/>
            <person name="Rondinelli E."/>
            <person name="Santos E.B.P."/>
            <person name="Santos F.R."/>
            <person name="Schneider M.P.C."/>
            <person name="Seuanez H.N."/>
            <person name="Silva A.M.R."/>
            <person name="da Silva A.L.C."/>
            <person name="Silva D.W."/>
            <person name="Silva R."/>
            <person name="Simoes I.C."/>
            <person name="Simon D."/>
            <person name="Soares C.M.A."/>
            <person name="Soares R.B.A."/>
            <person name="Souza E.M."/>
            <person name="Souza K.R.L."/>
            <person name="Souza R.C."/>
            <person name="Steffens M.B.R."/>
            <person name="Steindel M."/>
            <person name="Teixeira S.R."/>
            <person name="Urmenyi T."/>
            <person name="Vettore A."/>
            <person name="Wassem R."/>
            <person name="Zaha A."/>
            <person name="Simpson A.J.G."/>
        </authorList>
    </citation>
    <scope>NUCLEOTIDE SEQUENCE [LARGE SCALE GENOMIC DNA]</scope>
    <source>
        <strain>ATCC 12472 / DSM 30191 / JCM 1249 / CCUG 213 / NBRC 12614 / NCIMB 9131 / NCTC 9757 / MK</strain>
    </source>
</reference>
<proteinExistence type="inferred from homology"/>